<comment type="function">
    <text evidence="1">Catalyzes the formation of pyridoxal 5'-phosphate from ribose 5-phosphate (RBP), glyceraldehyde 3-phosphate (G3P) and ammonia. The ammonia is provided by the PdxT subunit. Can also use ribulose 5-phosphate and dihydroxyacetone phosphate as substrates, resulting from enzyme-catalyzed isomerization of RBP and G3P, respectively.</text>
</comment>
<comment type="catalytic activity">
    <reaction evidence="1">
        <text>aldehydo-D-ribose 5-phosphate + D-glyceraldehyde 3-phosphate + L-glutamine = pyridoxal 5'-phosphate + L-glutamate + phosphate + 3 H2O + H(+)</text>
        <dbReference type="Rhea" id="RHEA:31507"/>
        <dbReference type="ChEBI" id="CHEBI:15377"/>
        <dbReference type="ChEBI" id="CHEBI:15378"/>
        <dbReference type="ChEBI" id="CHEBI:29985"/>
        <dbReference type="ChEBI" id="CHEBI:43474"/>
        <dbReference type="ChEBI" id="CHEBI:58273"/>
        <dbReference type="ChEBI" id="CHEBI:58359"/>
        <dbReference type="ChEBI" id="CHEBI:59776"/>
        <dbReference type="ChEBI" id="CHEBI:597326"/>
        <dbReference type="EC" id="4.3.3.6"/>
    </reaction>
</comment>
<comment type="pathway">
    <text evidence="1">Cofactor biosynthesis; pyridoxal 5'-phosphate biosynthesis.</text>
</comment>
<comment type="subunit">
    <text evidence="1">In the presence of PdxT, forms a dodecamer of heterodimers.</text>
</comment>
<comment type="similarity">
    <text evidence="1">Belongs to the PdxS/SNZ family.</text>
</comment>
<keyword id="KW-0456">Lyase</keyword>
<keyword id="KW-0663">Pyridoxal phosphate</keyword>
<keyword id="KW-0704">Schiff base</keyword>
<proteinExistence type="inferred from homology"/>
<dbReference type="EC" id="4.3.3.6" evidence="1"/>
<dbReference type="EMBL" id="CP000057">
    <property type="protein sequence ID" value="AAX88702.1"/>
    <property type="molecule type" value="Genomic_DNA"/>
</dbReference>
<dbReference type="RefSeq" id="WP_005654219.1">
    <property type="nucleotide sequence ID" value="NC_007146.2"/>
</dbReference>
<dbReference type="SMR" id="Q4QJU5"/>
<dbReference type="GeneID" id="93220648"/>
<dbReference type="KEGG" id="hit:NTHI1950"/>
<dbReference type="HOGENOM" id="CLU_055352_1_0_6"/>
<dbReference type="UniPathway" id="UPA00245"/>
<dbReference type="Proteomes" id="UP000002525">
    <property type="component" value="Chromosome"/>
</dbReference>
<dbReference type="GO" id="GO:0036381">
    <property type="term" value="F:pyridoxal 5'-phosphate synthase (glutamine hydrolysing) activity"/>
    <property type="evidence" value="ECO:0007669"/>
    <property type="project" value="UniProtKB-UniRule"/>
</dbReference>
<dbReference type="GO" id="GO:0006520">
    <property type="term" value="P:amino acid metabolic process"/>
    <property type="evidence" value="ECO:0007669"/>
    <property type="project" value="TreeGrafter"/>
</dbReference>
<dbReference type="GO" id="GO:0042823">
    <property type="term" value="P:pyridoxal phosphate biosynthetic process"/>
    <property type="evidence" value="ECO:0007669"/>
    <property type="project" value="UniProtKB-UniRule"/>
</dbReference>
<dbReference type="GO" id="GO:0008615">
    <property type="term" value="P:pyridoxine biosynthetic process"/>
    <property type="evidence" value="ECO:0007669"/>
    <property type="project" value="TreeGrafter"/>
</dbReference>
<dbReference type="CDD" id="cd04727">
    <property type="entry name" value="pdxS"/>
    <property type="match status" value="1"/>
</dbReference>
<dbReference type="FunFam" id="3.20.20.70:FF:000001">
    <property type="entry name" value="Pyridoxine biosynthesis protein PDX1"/>
    <property type="match status" value="1"/>
</dbReference>
<dbReference type="Gene3D" id="3.20.20.70">
    <property type="entry name" value="Aldolase class I"/>
    <property type="match status" value="1"/>
</dbReference>
<dbReference type="HAMAP" id="MF_01824">
    <property type="entry name" value="PdxS"/>
    <property type="match status" value="1"/>
</dbReference>
<dbReference type="InterPro" id="IPR013785">
    <property type="entry name" value="Aldolase_TIM"/>
</dbReference>
<dbReference type="InterPro" id="IPR001852">
    <property type="entry name" value="PdxS/SNZ"/>
</dbReference>
<dbReference type="InterPro" id="IPR033755">
    <property type="entry name" value="PdxS/SNZ_N"/>
</dbReference>
<dbReference type="InterPro" id="IPR011060">
    <property type="entry name" value="RibuloseP-bd_barrel"/>
</dbReference>
<dbReference type="NCBIfam" id="NF003215">
    <property type="entry name" value="PRK04180.1"/>
    <property type="match status" value="1"/>
</dbReference>
<dbReference type="NCBIfam" id="TIGR00343">
    <property type="entry name" value="pyridoxal 5'-phosphate synthase lyase subunit PdxS"/>
    <property type="match status" value="1"/>
</dbReference>
<dbReference type="PANTHER" id="PTHR31829">
    <property type="entry name" value="PYRIDOXAL 5'-PHOSPHATE SYNTHASE SUBUNIT SNZ1-RELATED"/>
    <property type="match status" value="1"/>
</dbReference>
<dbReference type="PANTHER" id="PTHR31829:SF0">
    <property type="entry name" value="PYRIDOXAL 5'-PHOSPHATE SYNTHASE SUBUNIT SNZ1-RELATED"/>
    <property type="match status" value="1"/>
</dbReference>
<dbReference type="Pfam" id="PF01680">
    <property type="entry name" value="SOR_SNZ"/>
    <property type="match status" value="1"/>
</dbReference>
<dbReference type="PIRSF" id="PIRSF029271">
    <property type="entry name" value="Pdx1"/>
    <property type="match status" value="1"/>
</dbReference>
<dbReference type="SUPFAM" id="SSF51366">
    <property type="entry name" value="Ribulose-phoshate binding barrel"/>
    <property type="match status" value="1"/>
</dbReference>
<dbReference type="PROSITE" id="PS01235">
    <property type="entry name" value="PDXS_SNZ_1"/>
    <property type="match status" value="1"/>
</dbReference>
<dbReference type="PROSITE" id="PS51129">
    <property type="entry name" value="PDXS_SNZ_2"/>
    <property type="match status" value="1"/>
</dbReference>
<gene>
    <name evidence="1" type="primary">pdxS</name>
    <name type="ordered locus">NTHI1950</name>
</gene>
<protein>
    <recommendedName>
        <fullName evidence="1">Pyridoxal 5'-phosphate synthase subunit PdxS</fullName>
        <shortName evidence="1">PLP synthase subunit PdxS</shortName>
        <ecNumber evidence="1">4.3.3.6</ecNumber>
    </recommendedName>
    <alternativeName>
        <fullName evidence="1">Pdx1</fullName>
    </alternativeName>
</protein>
<accession>Q4QJU5</accession>
<organism>
    <name type="scientific">Haemophilus influenzae (strain 86-028NP)</name>
    <dbReference type="NCBI Taxonomy" id="281310"/>
    <lineage>
        <taxon>Bacteria</taxon>
        <taxon>Pseudomonadati</taxon>
        <taxon>Pseudomonadota</taxon>
        <taxon>Gammaproteobacteria</taxon>
        <taxon>Pasteurellales</taxon>
        <taxon>Pasteurellaceae</taxon>
        <taxon>Haemophilus</taxon>
    </lineage>
</organism>
<sequence>MAENRYELNKNLAQMLKGGVIMDVQNPEQARIAEAAGAAAVMALERIPADIRAVGGVSRMSDPKMIKEIQGAVSIPVMAKVRIGHFVEAQILEAIEIDYIDESEVLSPADNRFHVDKKEFQVPFVCGAKDLGEALRRIAEGASMIRTKGEPGTGDIVQAVRHMRMMSQEIRRIQNLREDELYVAAKDLQVPVELVQYVHKHGKLPVVNFAAGGIATPADAALMMQLGAEGVFVGSGIFKSGDPIKRASAIVKAVTNYRNPQILAQISEDLGEAMVGINENEIQILMAERGK</sequence>
<name>PDXS_HAEI8</name>
<feature type="chain" id="PRO_1000070377" description="Pyridoxal 5'-phosphate synthase subunit PdxS">
    <location>
        <begin position="1"/>
        <end position="291"/>
    </location>
</feature>
<feature type="active site" description="Schiff-base intermediate with D-ribose 5-phosphate" evidence="1">
    <location>
        <position position="80"/>
    </location>
</feature>
<feature type="binding site" evidence="1">
    <location>
        <position position="23"/>
    </location>
    <ligand>
        <name>D-ribose 5-phosphate</name>
        <dbReference type="ChEBI" id="CHEBI:78346"/>
    </ligand>
</feature>
<feature type="binding site" evidence="1">
    <location>
        <position position="152"/>
    </location>
    <ligand>
        <name>D-ribose 5-phosphate</name>
        <dbReference type="ChEBI" id="CHEBI:78346"/>
    </ligand>
</feature>
<feature type="binding site" evidence="1">
    <location>
        <position position="164"/>
    </location>
    <ligand>
        <name>D-glyceraldehyde 3-phosphate</name>
        <dbReference type="ChEBI" id="CHEBI:59776"/>
    </ligand>
</feature>
<feature type="binding site" evidence="1">
    <location>
        <position position="213"/>
    </location>
    <ligand>
        <name>D-ribose 5-phosphate</name>
        <dbReference type="ChEBI" id="CHEBI:78346"/>
    </ligand>
</feature>
<feature type="binding site" evidence="1">
    <location>
        <begin position="234"/>
        <end position="235"/>
    </location>
    <ligand>
        <name>D-ribose 5-phosphate</name>
        <dbReference type="ChEBI" id="CHEBI:78346"/>
    </ligand>
</feature>
<evidence type="ECO:0000255" key="1">
    <source>
        <dbReference type="HAMAP-Rule" id="MF_01824"/>
    </source>
</evidence>
<reference key="1">
    <citation type="journal article" date="2005" name="J. Bacteriol.">
        <title>Genomic sequence of an otitis media isolate of nontypeable Haemophilus influenzae: comparative study with H. influenzae serotype d, strain KW20.</title>
        <authorList>
            <person name="Harrison A."/>
            <person name="Dyer D.W."/>
            <person name="Gillaspy A."/>
            <person name="Ray W.C."/>
            <person name="Mungur R."/>
            <person name="Carson M.B."/>
            <person name="Zhong H."/>
            <person name="Gipson J."/>
            <person name="Gipson M."/>
            <person name="Johnson L.S."/>
            <person name="Lewis L."/>
            <person name="Bakaletz L.O."/>
            <person name="Munson R.S. Jr."/>
        </authorList>
    </citation>
    <scope>NUCLEOTIDE SEQUENCE [LARGE SCALE GENOMIC DNA]</scope>
    <source>
        <strain>86-028NP</strain>
    </source>
</reference>